<evidence type="ECO:0000255" key="1"/>
<evidence type="ECO:0000255" key="2">
    <source>
        <dbReference type="PROSITE-ProRule" id="PRU00297"/>
    </source>
</evidence>
<evidence type="ECO:0000269" key="3">
    <source>
    </source>
</evidence>
<evidence type="ECO:0000269" key="4">
    <source ref="7"/>
</evidence>
<evidence type="ECO:0000305" key="5"/>
<dbReference type="EC" id="1.11.1.7"/>
<dbReference type="EMBL" id="X98320">
    <property type="protein sequence ID" value="CAA66964.1"/>
    <property type="molecule type" value="mRNA"/>
</dbReference>
<dbReference type="EMBL" id="X98774">
    <property type="protein sequence ID" value="CAA67310.1"/>
    <property type="molecule type" value="mRNA"/>
</dbReference>
<dbReference type="EMBL" id="AB013389">
    <property type="protein sequence ID" value="BAB10915.1"/>
    <property type="molecule type" value="Genomic_DNA"/>
</dbReference>
<dbReference type="EMBL" id="CP002688">
    <property type="protein sequence ID" value="AED98207.1"/>
    <property type="molecule type" value="Genomic_DNA"/>
</dbReference>
<dbReference type="EMBL" id="BT008314">
    <property type="protein sequence ID" value="AAP37673.1"/>
    <property type="molecule type" value="mRNA"/>
</dbReference>
<dbReference type="RefSeq" id="NP_201440.1">
    <property type="nucleotide sequence ID" value="NM_126037.5"/>
</dbReference>
<dbReference type="SMR" id="Q9FJZ9"/>
<dbReference type="FunCoup" id="Q9FJZ9">
    <property type="interactions" value="154"/>
</dbReference>
<dbReference type="STRING" id="3702.Q9FJZ9"/>
<dbReference type="PeroxiBase" id="238">
    <property type="entry name" value="AtPrx72"/>
</dbReference>
<dbReference type="GlyCosmos" id="Q9FJZ9">
    <property type="glycosylation" value="2 sites, No reported glycans"/>
</dbReference>
<dbReference type="GlyGen" id="Q9FJZ9">
    <property type="glycosylation" value="2 sites"/>
</dbReference>
<dbReference type="PaxDb" id="3702-AT5G66390.1"/>
<dbReference type="ProteomicsDB" id="236301"/>
<dbReference type="EnsemblPlants" id="AT5G66390.1">
    <property type="protein sequence ID" value="AT5G66390.1"/>
    <property type="gene ID" value="AT5G66390"/>
</dbReference>
<dbReference type="GeneID" id="836771"/>
<dbReference type="Gramene" id="AT5G66390.1">
    <property type="protein sequence ID" value="AT5G66390.1"/>
    <property type="gene ID" value="AT5G66390"/>
</dbReference>
<dbReference type="KEGG" id="ath:AT5G66390"/>
<dbReference type="Araport" id="AT5G66390"/>
<dbReference type="TAIR" id="AT5G66390">
    <property type="gene designation" value="PRX72"/>
</dbReference>
<dbReference type="eggNOG" id="ENOG502QR5A">
    <property type="taxonomic scope" value="Eukaryota"/>
</dbReference>
<dbReference type="HOGENOM" id="CLU_010543_0_1_1"/>
<dbReference type="InParanoid" id="Q9FJZ9"/>
<dbReference type="OMA" id="RRVNHAY"/>
<dbReference type="PhylomeDB" id="Q9FJZ9"/>
<dbReference type="BioCyc" id="ARA:AT5G66390-MONOMER"/>
<dbReference type="PRO" id="PR:Q9FJZ9"/>
<dbReference type="Proteomes" id="UP000006548">
    <property type="component" value="Chromosome 5"/>
</dbReference>
<dbReference type="ExpressionAtlas" id="Q9FJZ9">
    <property type="expression patterns" value="baseline and differential"/>
</dbReference>
<dbReference type="GO" id="GO:0005576">
    <property type="term" value="C:extracellular region"/>
    <property type="evidence" value="ECO:0007669"/>
    <property type="project" value="UniProtKB-SubCell"/>
</dbReference>
<dbReference type="GO" id="GO:0009505">
    <property type="term" value="C:plant-type cell wall"/>
    <property type="evidence" value="ECO:0000314"/>
    <property type="project" value="TAIR"/>
</dbReference>
<dbReference type="GO" id="GO:0020037">
    <property type="term" value="F:heme binding"/>
    <property type="evidence" value="ECO:0007669"/>
    <property type="project" value="InterPro"/>
</dbReference>
<dbReference type="GO" id="GO:0140825">
    <property type="term" value="F:lactoperoxidase activity"/>
    <property type="evidence" value="ECO:0007669"/>
    <property type="project" value="UniProtKB-EC"/>
</dbReference>
<dbReference type="GO" id="GO:0046872">
    <property type="term" value="F:metal ion binding"/>
    <property type="evidence" value="ECO:0007669"/>
    <property type="project" value="UniProtKB-KW"/>
</dbReference>
<dbReference type="GO" id="GO:0042744">
    <property type="term" value="P:hydrogen peroxide catabolic process"/>
    <property type="evidence" value="ECO:0007669"/>
    <property type="project" value="UniProtKB-KW"/>
</dbReference>
<dbReference type="GO" id="GO:0009809">
    <property type="term" value="P:lignin biosynthetic process"/>
    <property type="evidence" value="ECO:0000315"/>
    <property type="project" value="TAIR"/>
</dbReference>
<dbReference type="GO" id="GO:0006979">
    <property type="term" value="P:response to oxidative stress"/>
    <property type="evidence" value="ECO:0007669"/>
    <property type="project" value="InterPro"/>
</dbReference>
<dbReference type="CDD" id="cd00693">
    <property type="entry name" value="secretory_peroxidase"/>
    <property type="match status" value="1"/>
</dbReference>
<dbReference type="FunFam" id="1.10.420.10:FF:000001">
    <property type="entry name" value="Peroxidase"/>
    <property type="match status" value="1"/>
</dbReference>
<dbReference type="FunFam" id="1.10.520.10:FF:000001">
    <property type="entry name" value="Peroxidase"/>
    <property type="match status" value="1"/>
</dbReference>
<dbReference type="Gene3D" id="1.10.520.10">
    <property type="match status" value="1"/>
</dbReference>
<dbReference type="Gene3D" id="1.10.420.10">
    <property type="entry name" value="Peroxidase, domain 2"/>
    <property type="match status" value="1"/>
</dbReference>
<dbReference type="InterPro" id="IPR002016">
    <property type="entry name" value="Haem_peroxidase"/>
</dbReference>
<dbReference type="InterPro" id="IPR010255">
    <property type="entry name" value="Haem_peroxidase_sf"/>
</dbReference>
<dbReference type="InterPro" id="IPR000823">
    <property type="entry name" value="Peroxidase_pln"/>
</dbReference>
<dbReference type="InterPro" id="IPR019793">
    <property type="entry name" value="Peroxidases_heam-ligand_BS"/>
</dbReference>
<dbReference type="InterPro" id="IPR033905">
    <property type="entry name" value="Secretory_peroxidase"/>
</dbReference>
<dbReference type="PANTHER" id="PTHR31388:SF3">
    <property type="entry name" value="PEROXIDASE 72"/>
    <property type="match status" value="1"/>
</dbReference>
<dbReference type="PANTHER" id="PTHR31388">
    <property type="entry name" value="PEROXIDASE 72-RELATED"/>
    <property type="match status" value="1"/>
</dbReference>
<dbReference type="Pfam" id="PF00141">
    <property type="entry name" value="peroxidase"/>
    <property type="match status" value="1"/>
</dbReference>
<dbReference type="PRINTS" id="PR00458">
    <property type="entry name" value="PEROXIDASE"/>
</dbReference>
<dbReference type="PRINTS" id="PR00461">
    <property type="entry name" value="PLPEROXIDASE"/>
</dbReference>
<dbReference type="SUPFAM" id="SSF48113">
    <property type="entry name" value="Heme-dependent peroxidases"/>
    <property type="match status" value="1"/>
</dbReference>
<dbReference type="PROSITE" id="PS00435">
    <property type="entry name" value="PEROXIDASE_1"/>
    <property type="match status" value="1"/>
</dbReference>
<dbReference type="PROSITE" id="PS50873">
    <property type="entry name" value="PEROXIDASE_4"/>
    <property type="match status" value="1"/>
</dbReference>
<gene>
    <name type="primary">PER72</name>
    <name type="synonym">P72</name>
    <name type="ordered locus">At5g66390</name>
    <name type="ORF">K1F13.4</name>
    <name type="ORF">K1L20.16</name>
</gene>
<keyword id="KW-0106">Calcium</keyword>
<keyword id="KW-1015">Disulfide bond</keyword>
<keyword id="KW-0325">Glycoprotein</keyword>
<keyword id="KW-0349">Heme</keyword>
<keyword id="KW-0376">Hydrogen peroxide</keyword>
<keyword id="KW-0408">Iron</keyword>
<keyword id="KW-0479">Metal-binding</keyword>
<keyword id="KW-0560">Oxidoreductase</keyword>
<keyword id="KW-0575">Peroxidase</keyword>
<keyword id="KW-1185">Reference proteome</keyword>
<keyword id="KW-0964">Secreted</keyword>
<keyword id="KW-0732">Signal</keyword>
<accession>Q9FJZ9</accession>
<accession>Q43736</accession>
<feature type="signal peptide" evidence="1">
    <location>
        <begin position="1"/>
        <end position="23"/>
    </location>
</feature>
<feature type="chain" id="PRO_0000023737" description="Peroxidase 72">
    <location>
        <begin position="24"/>
        <end position="336"/>
    </location>
</feature>
<feature type="active site" description="Proton acceptor" evidence="2">
    <location>
        <position position="73"/>
    </location>
</feature>
<feature type="binding site" evidence="2">
    <location>
        <position position="74"/>
    </location>
    <ligand>
        <name>Ca(2+)</name>
        <dbReference type="ChEBI" id="CHEBI:29108"/>
        <label>1</label>
    </ligand>
</feature>
<feature type="binding site" evidence="2">
    <location>
        <position position="77"/>
    </location>
    <ligand>
        <name>Ca(2+)</name>
        <dbReference type="ChEBI" id="CHEBI:29108"/>
        <label>1</label>
    </ligand>
</feature>
<feature type="binding site" evidence="2">
    <location>
        <position position="79"/>
    </location>
    <ligand>
        <name>Ca(2+)</name>
        <dbReference type="ChEBI" id="CHEBI:29108"/>
        <label>1</label>
    </ligand>
</feature>
<feature type="binding site" evidence="2">
    <location>
        <position position="81"/>
    </location>
    <ligand>
        <name>Ca(2+)</name>
        <dbReference type="ChEBI" id="CHEBI:29108"/>
        <label>1</label>
    </ligand>
</feature>
<feature type="binding site" evidence="2">
    <location>
        <position position="83"/>
    </location>
    <ligand>
        <name>Ca(2+)</name>
        <dbReference type="ChEBI" id="CHEBI:29108"/>
        <label>1</label>
    </ligand>
</feature>
<feature type="binding site" evidence="2">
    <location>
        <position position="170"/>
    </location>
    <ligand>
        <name>substrate</name>
    </ligand>
</feature>
<feature type="binding site" description="axial binding residue" evidence="2">
    <location>
        <position position="200"/>
    </location>
    <ligand>
        <name>heme b</name>
        <dbReference type="ChEBI" id="CHEBI:60344"/>
    </ligand>
    <ligandPart>
        <name>Fe</name>
        <dbReference type="ChEBI" id="CHEBI:18248"/>
    </ligandPart>
</feature>
<feature type="binding site" evidence="2">
    <location>
        <position position="201"/>
    </location>
    <ligand>
        <name>Ca(2+)</name>
        <dbReference type="ChEBI" id="CHEBI:29108"/>
        <label>2</label>
    </ligand>
</feature>
<feature type="binding site" evidence="2">
    <location>
        <position position="252"/>
    </location>
    <ligand>
        <name>Ca(2+)</name>
        <dbReference type="ChEBI" id="CHEBI:29108"/>
        <label>2</label>
    </ligand>
</feature>
<feature type="binding site" evidence="2">
    <location>
        <position position="255"/>
    </location>
    <ligand>
        <name>Ca(2+)</name>
        <dbReference type="ChEBI" id="CHEBI:29108"/>
        <label>2</label>
    </ligand>
</feature>
<feature type="binding site" evidence="2">
    <location>
        <position position="260"/>
    </location>
    <ligand>
        <name>Ca(2+)</name>
        <dbReference type="ChEBI" id="CHEBI:29108"/>
        <label>2</label>
    </ligand>
</feature>
<feature type="site" description="Transition state stabilizer" evidence="2">
    <location>
        <position position="69"/>
    </location>
</feature>
<feature type="glycosylation site" description="N-linked (GlcNAc...) asparagine" evidence="1">
    <location>
        <position position="173"/>
    </location>
</feature>
<feature type="glycosylation site" description="N-linked (GlcNAc...) asparagine" evidence="1">
    <location>
        <position position="216"/>
    </location>
</feature>
<feature type="disulfide bond" evidence="2">
    <location>
        <begin position="42"/>
        <end position="122"/>
    </location>
</feature>
<feature type="disulfide bond" evidence="2">
    <location>
        <begin position="75"/>
        <end position="80"/>
    </location>
</feature>
<feature type="disulfide bond" evidence="2">
    <location>
        <begin position="128"/>
        <end position="329"/>
    </location>
</feature>
<feature type="disulfide bond" evidence="2">
    <location>
        <begin position="207"/>
        <end position="239"/>
    </location>
</feature>
<feature type="sequence conflict" description="In Ref. 1 and 2." evidence="5" ref="1 2">
    <original>P</original>
    <variation>R</variation>
    <location>
        <position position="151"/>
    </location>
</feature>
<feature type="sequence conflict" description="In Ref. 1 and 2." evidence="5" ref="1 2">
    <original>K</original>
    <variation>I</variation>
    <location>
        <position position="307"/>
    </location>
</feature>
<reference key="1">
    <citation type="online journal article" date="1996" name="Plant Gene Register">
        <title>Eleven cDNA clones from Arabidopsis thaliana encoding isoperoxidases.</title>
        <authorList>
            <person name="Capelli N."/>
            <person name="Tognolli M."/>
            <person name="Flach J."/>
            <person name="Overney S."/>
            <person name="Penel C."/>
            <person name="Greppin H."/>
            <person name="Simon P."/>
        </authorList>
        <locator>PGR96-066</locator>
    </citation>
    <scope>NUCLEOTIDE SEQUENCE [MRNA]</scope>
    <source>
        <strain>cv. Columbia</strain>
    </source>
</reference>
<reference key="2">
    <citation type="submission" date="1996-07" db="EMBL/GenBank/DDBJ databases">
        <title>From expressed sequence tags to structure, function, evolution and expression of 28 ER-targeted Arabidopsis peroxidases.</title>
        <authorList>
            <person name="Welinder K.G."/>
            <person name="Jespersen H.M."/>
            <person name="Kjaersgaard I.V.H."/>
            <person name="Justesen A.F."/>
            <person name="Oestergaard L."/>
            <person name="Abelskov A.K."/>
            <person name="Jensen R.B."/>
            <person name="Hansen L.N."/>
            <person name="Rasmussen S.K."/>
        </authorList>
    </citation>
    <scope>NUCLEOTIDE SEQUENCE [MRNA]</scope>
    <source>
        <strain>cv. Columbia</strain>
    </source>
</reference>
<reference key="3">
    <citation type="journal article" date="1998" name="DNA Res.">
        <title>Structural analysis of Arabidopsis thaliana chromosome 5. VI. Sequence features of the regions of 1,367,185 bp covered by 19 physically assigned P1 and TAC clones.</title>
        <authorList>
            <person name="Kotani H."/>
            <person name="Nakamura Y."/>
            <person name="Sato S."/>
            <person name="Asamizu E."/>
            <person name="Kaneko T."/>
            <person name="Miyajima N."/>
            <person name="Tabata S."/>
        </authorList>
    </citation>
    <scope>NUCLEOTIDE SEQUENCE [LARGE SCALE GENOMIC DNA]</scope>
    <source>
        <strain>cv. Columbia</strain>
    </source>
</reference>
<reference key="4">
    <citation type="journal article" date="2017" name="Plant J.">
        <title>Araport11: a complete reannotation of the Arabidopsis thaliana reference genome.</title>
        <authorList>
            <person name="Cheng C.Y."/>
            <person name="Krishnakumar V."/>
            <person name="Chan A.P."/>
            <person name="Thibaud-Nissen F."/>
            <person name="Schobel S."/>
            <person name="Town C.D."/>
        </authorList>
    </citation>
    <scope>GENOME REANNOTATION</scope>
    <source>
        <strain>cv. Columbia</strain>
    </source>
</reference>
<reference key="5">
    <citation type="journal article" date="2003" name="Science">
        <title>Empirical analysis of transcriptional activity in the Arabidopsis genome.</title>
        <authorList>
            <person name="Yamada K."/>
            <person name="Lim J."/>
            <person name="Dale J.M."/>
            <person name="Chen H."/>
            <person name="Shinn P."/>
            <person name="Palm C.J."/>
            <person name="Southwick A.M."/>
            <person name="Wu H.C."/>
            <person name="Kim C.J."/>
            <person name="Nguyen M."/>
            <person name="Pham P.K."/>
            <person name="Cheuk R.F."/>
            <person name="Karlin-Newmann G."/>
            <person name="Liu S.X."/>
            <person name="Lam B."/>
            <person name="Sakano H."/>
            <person name="Wu T."/>
            <person name="Yu G."/>
            <person name="Miranda M."/>
            <person name="Quach H.L."/>
            <person name="Tripp M."/>
            <person name="Chang C.H."/>
            <person name="Lee J.M."/>
            <person name="Toriumi M.J."/>
            <person name="Chan M.M."/>
            <person name="Tang C.C."/>
            <person name="Onodera C.S."/>
            <person name="Deng J.M."/>
            <person name="Akiyama K."/>
            <person name="Ansari Y."/>
            <person name="Arakawa T."/>
            <person name="Banh J."/>
            <person name="Banno F."/>
            <person name="Bowser L."/>
            <person name="Brooks S.Y."/>
            <person name="Carninci P."/>
            <person name="Chao Q."/>
            <person name="Choy N."/>
            <person name="Enju A."/>
            <person name="Goldsmith A.D."/>
            <person name="Gurjal M."/>
            <person name="Hansen N.F."/>
            <person name="Hayashizaki Y."/>
            <person name="Johnson-Hopson C."/>
            <person name="Hsuan V.W."/>
            <person name="Iida K."/>
            <person name="Karnes M."/>
            <person name="Khan S."/>
            <person name="Koesema E."/>
            <person name="Ishida J."/>
            <person name="Jiang P.X."/>
            <person name="Jones T."/>
            <person name="Kawai J."/>
            <person name="Kamiya A."/>
            <person name="Meyers C."/>
            <person name="Nakajima M."/>
            <person name="Narusaka M."/>
            <person name="Seki M."/>
            <person name="Sakurai T."/>
            <person name="Satou M."/>
            <person name="Tamse R."/>
            <person name="Vaysberg M."/>
            <person name="Wallender E.K."/>
            <person name="Wong C."/>
            <person name="Yamamura Y."/>
            <person name="Yuan S."/>
            <person name="Shinozaki K."/>
            <person name="Davis R.W."/>
            <person name="Theologis A."/>
            <person name="Ecker J.R."/>
        </authorList>
    </citation>
    <scope>NUCLEOTIDE SEQUENCE [LARGE SCALE MRNA]</scope>
    <source>
        <strain>cv. Columbia</strain>
    </source>
</reference>
<reference key="6">
    <citation type="journal article" date="1998" name="FEBS Lett.">
        <title>Computational analyses and annotations of the Arabidopsis peroxidase gene family.</title>
        <authorList>
            <person name="Oestergaard L."/>
            <person name="Pedersen A.G."/>
            <person name="Jespersen H.M."/>
            <person name="Brunak S."/>
            <person name="Welinder K.G."/>
        </authorList>
    </citation>
    <scope>CHARACTERIZATION</scope>
    <source>
        <strain>cv. Columbia</strain>
    </source>
</reference>
<reference key="7">
    <citation type="journal article" date="2001" name="Plant Physiol. Biochem.">
        <title>Toward elucidating the global gene expression patterns of developing Arabidopsis: parallel analysis of 8300 genes by a high-density oligonucleotide probe array.</title>
        <authorList>
            <person name="Zhu T."/>
            <person name="Budworth P."/>
            <person name="Han B."/>
            <person name="Brown D."/>
            <person name="Chang H.-S."/>
            <person name="Zou G."/>
            <person name="Wang X."/>
        </authorList>
    </citation>
    <scope>TISSUE SPECIFICITY</scope>
    <source>
        <strain>cv. Columbia</strain>
    </source>
</reference>
<reference key="8">
    <citation type="journal article" date="2002" name="Plant Cell">
        <title>Arabidopsis transcriptome profiling indicates that multiple regulatory pathways are activated during cold acclimation in addition to the CBF cold response pathway.</title>
        <authorList>
            <person name="Fowler S."/>
            <person name="Thomashow M.F."/>
        </authorList>
    </citation>
    <scope>INDUCTION</scope>
    <source>
        <strain>cv. Columbia</strain>
    </source>
</reference>
<reference key="9">
    <citation type="journal article" date="2002" name="Gene">
        <title>Analysis and expression of the class III peroxidase large gene family in Arabidopsis thaliana.</title>
        <authorList>
            <person name="Tognolli M."/>
            <person name="Penel C."/>
            <person name="Greppin H."/>
            <person name="Simon P."/>
        </authorList>
    </citation>
    <scope>GENE FAMILY ORGANIZATION</scope>
    <scope>NOMENCLATURE</scope>
    <source>
        <strain>cv. Columbia</strain>
    </source>
</reference>
<comment type="function">
    <text>Removal of H(2)O(2), oxidation of toxic reductants, biosynthesis and degradation of lignin, suberization, auxin catabolism, response to environmental stresses such as wounding, pathogen attack and oxidative stress. These functions might be dependent on each isozyme/isoform in each plant tissue.</text>
</comment>
<comment type="catalytic activity">
    <reaction>
        <text>2 a phenolic donor + H2O2 = 2 a phenolic radical donor + 2 H2O</text>
        <dbReference type="Rhea" id="RHEA:56136"/>
        <dbReference type="ChEBI" id="CHEBI:15377"/>
        <dbReference type="ChEBI" id="CHEBI:16240"/>
        <dbReference type="ChEBI" id="CHEBI:139520"/>
        <dbReference type="ChEBI" id="CHEBI:139521"/>
        <dbReference type="EC" id="1.11.1.7"/>
    </reaction>
</comment>
<comment type="cofactor">
    <cofactor evidence="2">
        <name>heme b</name>
        <dbReference type="ChEBI" id="CHEBI:60344"/>
    </cofactor>
    <text evidence="2">Binds 1 heme b (iron(II)-protoporphyrin IX) group per subunit.</text>
</comment>
<comment type="cofactor">
    <cofactor evidence="2">
        <name>Ca(2+)</name>
        <dbReference type="ChEBI" id="CHEBI:29108"/>
    </cofactor>
    <text evidence="2">Binds 2 calcium ions per subunit.</text>
</comment>
<comment type="subcellular location">
    <subcellularLocation>
        <location evidence="2">Secreted</location>
    </subcellularLocation>
</comment>
<comment type="tissue specificity">
    <text evidence="4">Slightly expressed in roots.</text>
</comment>
<comment type="induction">
    <text evidence="3">Up-regulated transiently by a cold treatment.</text>
</comment>
<comment type="miscellaneous">
    <text>There are 73 peroxidase genes in A.thaliana.</text>
</comment>
<comment type="similarity">
    <text evidence="2">Belongs to the peroxidase family. Classical plant (class III) peroxidase subfamily.</text>
</comment>
<proteinExistence type="evidence at protein level"/>
<protein>
    <recommendedName>
        <fullName>Peroxidase 72</fullName>
        <shortName>Atperox P72</shortName>
        <ecNumber>1.11.1.7</ecNumber>
    </recommendedName>
    <alternativeName>
        <fullName>ATP6a</fullName>
    </alternativeName>
    <alternativeName>
        <fullName>PRXR8</fullName>
    </alternativeName>
</protein>
<sequence>MAKSLNILIAALSLIAFSPFCLCSKAYGSGGYLFPQFYDQSCPKAQEIVQSIVAKAFEHDPRMPASLLRLHFHDCFVKGCDASILLDSSGTIISEKRSNPNRNSARGFELIEEIKHALEQECPETVSCADILALAARDSTVITGGPSWEVPLGRRDARGASLSGSNNDIPAPNNTFQTILTKFKRQGLDLVDLVSLSGSHTIGNSRCTSFRQRLYNQSGNGKPDMTLSQYYATLLRQRCPRSGGDQTLFFLDFATPFKFDNHYFKNLIMYKGLLSSDEILFTKNKQSKELVELYAENQEAFFEQFAKSMVKMGNISPLTGAKGEIRRICRRVNHAY</sequence>
<organism>
    <name type="scientific">Arabidopsis thaliana</name>
    <name type="common">Mouse-ear cress</name>
    <dbReference type="NCBI Taxonomy" id="3702"/>
    <lineage>
        <taxon>Eukaryota</taxon>
        <taxon>Viridiplantae</taxon>
        <taxon>Streptophyta</taxon>
        <taxon>Embryophyta</taxon>
        <taxon>Tracheophyta</taxon>
        <taxon>Spermatophyta</taxon>
        <taxon>Magnoliopsida</taxon>
        <taxon>eudicotyledons</taxon>
        <taxon>Gunneridae</taxon>
        <taxon>Pentapetalae</taxon>
        <taxon>rosids</taxon>
        <taxon>malvids</taxon>
        <taxon>Brassicales</taxon>
        <taxon>Brassicaceae</taxon>
        <taxon>Camelineae</taxon>
        <taxon>Arabidopsis</taxon>
    </lineage>
</organism>
<name>PER72_ARATH</name>